<proteinExistence type="inferred from homology"/>
<organism>
    <name type="scientific">Leptothrix cholodnii (strain ATCC 51168 / LMG 8142 / SP-6)</name>
    <name type="common">Leptothrix discophora (strain SP-6)</name>
    <dbReference type="NCBI Taxonomy" id="395495"/>
    <lineage>
        <taxon>Bacteria</taxon>
        <taxon>Pseudomonadati</taxon>
        <taxon>Pseudomonadota</taxon>
        <taxon>Betaproteobacteria</taxon>
        <taxon>Burkholderiales</taxon>
        <taxon>Sphaerotilaceae</taxon>
        <taxon>Leptothrix</taxon>
    </lineage>
</organism>
<sequence>MSLFNKVTKTFQWGQHTVTLETGEISRQAGGAVIVNIDDTVVLATVVGAKNAKPGQDFFPLTVDYIEKTYAAGKIPGSFFKREAKPSELEVLTSRLIDRPLRPLFPEGFYNEVHVVVHVLSLNPEASADIAALIGSSAALAISGIPFNGPVGAARVGYVNGEYVLNPGPTQLKSSKMDLVVAGTEAAVLMVESEADQLTEEVMLGAVVYGHEQAKVAIAAINELVRDAGKPAWDWQPPARNEPLIAKVAEFGLAKIEAAYQIRNKQARTHACRAAYAEVKISLAEAGVVFDNVDVDNLLFELEAKTVRGQILQGEPRIDGRDTRTVRPIEIRTGVLPRTHGSALFTRGETQALVVATLGTDQDSQRIDALAGDFRDSFLFHYNMPPFATGEVGRMGTTKRRETGHGRLAKRALVPLLPPKDEFGYTIRVVSEITESNGSSSMASVCGGCLAMMDAGVPMKAHVAGIAMGLIKEGNRFAVLTDILGDEDHLGDMDFKVAGTTAGVTALQMDIKIQGITKEIMQVALAQAKEARLHILGKMVEAMGTANTEVSNFAPRLYTMKINPEKIRDVIGKGGSVIRALTEETGCQIDIGEDGTITIASTDADKAELAKKRIADITAEAEIGKVYEGPVVKILDFGALINILPGKDGLLHISQIAHQRVEKVTDFLTEGQVVKVKVLETDEKGRIKLSMKALIERPEGMEFEERAPRREGGFGDRGDRGDRGPRRDRGGDRPERGERPARAEQPATEESGAPAAGQPQQQQGQQQ</sequence>
<evidence type="ECO:0000255" key="1">
    <source>
        <dbReference type="HAMAP-Rule" id="MF_01595"/>
    </source>
</evidence>
<evidence type="ECO:0000256" key="2">
    <source>
        <dbReference type="SAM" id="MobiDB-lite"/>
    </source>
</evidence>
<comment type="function">
    <text evidence="1">Involved in mRNA degradation. Catalyzes the phosphorolysis of single-stranded polyribonucleotides processively in the 3'- to 5'-direction.</text>
</comment>
<comment type="catalytic activity">
    <reaction evidence="1">
        <text>RNA(n+1) + phosphate = RNA(n) + a ribonucleoside 5'-diphosphate</text>
        <dbReference type="Rhea" id="RHEA:22096"/>
        <dbReference type="Rhea" id="RHEA-COMP:14527"/>
        <dbReference type="Rhea" id="RHEA-COMP:17342"/>
        <dbReference type="ChEBI" id="CHEBI:43474"/>
        <dbReference type="ChEBI" id="CHEBI:57930"/>
        <dbReference type="ChEBI" id="CHEBI:140395"/>
        <dbReference type="EC" id="2.7.7.8"/>
    </reaction>
</comment>
<comment type="cofactor">
    <cofactor evidence="1">
        <name>Mg(2+)</name>
        <dbReference type="ChEBI" id="CHEBI:18420"/>
    </cofactor>
</comment>
<comment type="subcellular location">
    <subcellularLocation>
        <location evidence="1">Cytoplasm</location>
    </subcellularLocation>
</comment>
<comment type="similarity">
    <text evidence="1">Belongs to the polyribonucleotide nucleotidyltransferase family.</text>
</comment>
<accession>B1Y823</accession>
<gene>
    <name evidence="1" type="primary">pnp</name>
    <name type="ordered locus">Lcho_1497</name>
</gene>
<feature type="chain" id="PRO_1000147928" description="Polyribonucleotide nucleotidyltransferase">
    <location>
        <begin position="1"/>
        <end position="767"/>
    </location>
</feature>
<feature type="domain" description="KH" evidence="1">
    <location>
        <begin position="555"/>
        <end position="614"/>
    </location>
</feature>
<feature type="domain" description="S1 motif" evidence="1">
    <location>
        <begin position="624"/>
        <end position="692"/>
    </location>
</feature>
<feature type="region of interest" description="Disordered" evidence="2">
    <location>
        <begin position="700"/>
        <end position="767"/>
    </location>
</feature>
<feature type="compositionally biased region" description="Basic and acidic residues" evidence="2">
    <location>
        <begin position="700"/>
        <end position="742"/>
    </location>
</feature>
<feature type="compositionally biased region" description="Low complexity" evidence="2">
    <location>
        <begin position="752"/>
        <end position="767"/>
    </location>
</feature>
<feature type="binding site" evidence="1">
    <location>
        <position position="488"/>
    </location>
    <ligand>
        <name>Mg(2+)</name>
        <dbReference type="ChEBI" id="CHEBI:18420"/>
    </ligand>
</feature>
<feature type="binding site" evidence="1">
    <location>
        <position position="494"/>
    </location>
    <ligand>
        <name>Mg(2+)</name>
        <dbReference type="ChEBI" id="CHEBI:18420"/>
    </ligand>
</feature>
<dbReference type="EC" id="2.7.7.8" evidence="1"/>
<dbReference type="EMBL" id="CP001013">
    <property type="protein sequence ID" value="ACB33765.1"/>
    <property type="molecule type" value="Genomic_DNA"/>
</dbReference>
<dbReference type="RefSeq" id="WP_012346527.1">
    <property type="nucleotide sequence ID" value="NC_010524.1"/>
</dbReference>
<dbReference type="SMR" id="B1Y823"/>
<dbReference type="STRING" id="395495.Lcho_1497"/>
<dbReference type="KEGG" id="lch:Lcho_1497"/>
<dbReference type="eggNOG" id="COG1185">
    <property type="taxonomic scope" value="Bacteria"/>
</dbReference>
<dbReference type="HOGENOM" id="CLU_004217_2_2_4"/>
<dbReference type="OrthoDB" id="9804305at2"/>
<dbReference type="Proteomes" id="UP000001693">
    <property type="component" value="Chromosome"/>
</dbReference>
<dbReference type="GO" id="GO:0005829">
    <property type="term" value="C:cytosol"/>
    <property type="evidence" value="ECO:0007669"/>
    <property type="project" value="TreeGrafter"/>
</dbReference>
<dbReference type="GO" id="GO:0000175">
    <property type="term" value="F:3'-5'-RNA exonuclease activity"/>
    <property type="evidence" value="ECO:0007669"/>
    <property type="project" value="TreeGrafter"/>
</dbReference>
<dbReference type="GO" id="GO:0000287">
    <property type="term" value="F:magnesium ion binding"/>
    <property type="evidence" value="ECO:0007669"/>
    <property type="project" value="UniProtKB-UniRule"/>
</dbReference>
<dbReference type="GO" id="GO:0004654">
    <property type="term" value="F:polyribonucleotide nucleotidyltransferase activity"/>
    <property type="evidence" value="ECO:0007669"/>
    <property type="project" value="UniProtKB-UniRule"/>
</dbReference>
<dbReference type="GO" id="GO:0003723">
    <property type="term" value="F:RNA binding"/>
    <property type="evidence" value="ECO:0007669"/>
    <property type="project" value="UniProtKB-UniRule"/>
</dbReference>
<dbReference type="GO" id="GO:0006402">
    <property type="term" value="P:mRNA catabolic process"/>
    <property type="evidence" value="ECO:0007669"/>
    <property type="project" value="UniProtKB-UniRule"/>
</dbReference>
<dbReference type="GO" id="GO:0006396">
    <property type="term" value="P:RNA processing"/>
    <property type="evidence" value="ECO:0007669"/>
    <property type="project" value="InterPro"/>
</dbReference>
<dbReference type="CDD" id="cd02393">
    <property type="entry name" value="KH-I_PNPase"/>
    <property type="match status" value="1"/>
</dbReference>
<dbReference type="CDD" id="cd11363">
    <property type="entry name" value="RNase_PH_PNPase_1"/>
    <property type="match status" value="1"/>
</dbReference>
<dbReference type="CDD" id="cd11364">
    <property type="entry name" value="RNase_PH_PNPase_2"/>
    <property type="match status" value="1"/>
</dbReference>
<dbReference type="CDD" id="cd04472">
    <property type="entry name" value="S1_PNPase"/>
    <property type="match status" value="1"/>
</dbReference>
<dbReference type="FunFam" id="2.40.50.140:FF:000023">
    <property type="entry name" value="Polyribonucleotide nucleotidyltransferase"/>
    <property type="match status" value="1"/>
</dbReference>
<dbReference type="FunFam" id="3.30.1370.10:FF:000001">
    <property type="entry name" value="Polyribonucleotide nucleotidyltransferase"/>
    <property type="match status" value="1"/>
</dbReference>
<dbReference type="FunFam" id="3.30.230.70:FF:000001">
    <property type="entry name" value="Polyribonucleotide nucleotidyltransferase"/>
    <property type="match status" value="1"/>
</dbReference>
<dbReference type="FunFam" id="3.30.230.70:FF:000002">
    <property type="entry name" value="Polyribonucleotide nucleotidyltransferase"/>
    <property type="match status" value="1"/>
</dbReference>
<dbReference type="Gene3D" id="3.30.230.70">
    <property type="entry name" value="GHMP Kinase, N-terminal domain"/>
    <property type="match status" value="2"/>
</dbReference>
<dbReference type="Gene3D" id="3.30.1370.10">
    <property type="entry name" value="K Homology domain, type 1"/>
    <property type="match status" value="1"/>
</dbReference>
<dbReference type="Gene3D" id="2.40.50.140">
    <property type="entry name" value="Nucleic acid-binding proteins"/>
    <property type="match status" value="1"/>
</dbReference>
<dbReference type="HAMAP" id="MF_01595">
    <property type="entry name" value="PNPase"/>
    <property type="match status" value="1"/>
</dbReference>
<dbReference type="InterPro" id="IPR001247">
    <property type="entry name" value="ExoRNase_PH_dom1"/>
</dbReference>
<dbReference type="InterPro" id="IPR015847">
    <property type="entry name" value="ExoRNase_PH_dom2"/>
</dbReference>
<dbReference type="InterPro" id="IPR036345">
    <property type="entry name" value="ExoRNase_PH_dom2_sf"/>
</dbReference>
<dbReference type="InterPro" id="IPR004087">
    <property type="entry name" value="KH_dom"/>
</dbReference>
<dbReference type="InterPro" id="IPR004088">
    <property type="entry name" value="KH_dom_type_1"/>
</dbReference>
<dbReference type="InterPro" id="IPR036612">
    <property type="entry name" value="KH_dom_type_1_sf"/>
</dbReference>
<dbReference type="InterPro" id="IPR012340">
    <property type="entry name" value="NA-bd_OB-fold"/>
</dbReference>
<dbReference type="InterPro" id="IPR012162">
    <property type="entry name" value="PNPase"/>
</dbReference>
<dbReference type="InterPro" id="IPR027408">
    <property type="entry name" value="PNPase/RNase_PH_dom_sf"/>
</dbReference>
<dbReference type="InterPro" id="IPR015848">
    <property type="entry name" value="PNPase_PH_RNA-bd_bac/org-type"/>
</dbReference>
<dbReference type="InterPro" id="IPR036456">
    <property type="entry name" value="PNPase_PH_RNA-bd_sf"/>
</dbReference>
<dbReference type="InterPro" id="IPR020568">
    <property type="entry name" value="Ribosomal_Su5_D2-typ_SF"/>
</dbReference>
<dbReference type="InterPro" id="IPR003029">
    <property type="entry name" value="S1_domain"/>
</dbReference>
<dbReference type="NCBIfam" id="TIGR03591">
    <property type="entry name" value="polynuc_phos"/>
    <property type="match status" value="1"/>
</dbReference>
<dbReference type="NCBIfam" id="NF008805">
    <property type="entry name" value="PRK11824.1"/>
    <property type="match status" value="1"/>
</dbReference>
<dbReference type="PANTHER" id="PTHR11252">
    <property type="entry name" value="POLYRIBONUCLEOTIDE NUCLEOTIDYLTRANSFERASE"/>
    <property type="match status" value="1"/>
</dbReference>
<dbReference type="PANTHER" id="PTHR11252:SF0">
    <property type="entry name" value="POLYRIBONUCLEOTIDE NUCLEOTIDYLTRANSFERASE 1, MITOCHONDRIAL"/>
    <property type="match status" value="1"/>
</dbReference>
<dbReference type="Pfam" id="PF00013">
    <property type="entry name" value="KH_1"/>
    <property type="match status" value="1"/>
</dbReference>
<dbReference type="Pfam" id="PF03726">
    <property type="entry name" value="PNPase"/>
    <property type="match status" value="1"/>
</dbReference>
<dbReference type="Pfam" id="PF01138">
    <property type="entry name" value="RNase_PH"/>
    <property type="match status" value="2"/>
</dbReference>
<dbReference type="Pfam" id="PF03725">
    <property type="entry name" value="RNase_PH_C"/>
    <property type="match status" value="2"/>
</dbReference>
<dbReference type="Pfam" id="PF00575">
    <property type="entry name" value="S1"/>
    <property type="match status" value="1"/>
</dbReference>
<dbReference type="PIRSF" id="PIRSF005499">
    <property type="entry name" value="PNPase"/>
    <property type="match status" value="1"/>
</dbReference>
<dbReference type="SMART" id="SM00322">
    <property type="entry name" value="KH"/>
    <property type="match status" value="1"/>
</dbReference>
<dbReference type="SMART" id="SM00316">
    <property type="entry name" value="S1"/>
    <property type="match status" value="1"/>
</dbReference>
<dbReference type="SUPFAM" id="SSF54791">
    <property type="entry name" value="Eukaryotic type KH-domain (KH-domain type I)"/>
    <property type="match status" value="1"/>
</dbReference>
<dbReference type="SUPFAM" id="SSF50249">
    <property type="entry name" value="Nucleic acid-binding proteins"/>
    <property type="match status" value="1"/>
</dbReference>
<dbReference type="SUPFAM" id="SSF46915">
    <property type="entry name" value="Polynucleotide phosphorylase/guanosine pentaphosphate synthase (PNPase/GPSI), domain 3"/>
    <property type="match status" value="1"/>
</dbReference>
<dbReference type="SUPFAM" id="SSF55666">
    <property type="entry name" value="Ribonuclease PH domain 2-like"/>
    <property type="match status" value="2"/>
</dbReference>
<dbReference type="SUPFAM" id="SSF54211">
    <property type="entry name" value="Ribosomal protein S5 domain 2-like"/>
    <property type="match status" value="2"/>
</dbReference>
<dbReference type="PROSITE" id="PS50084">
    <property type="entry name" value="KH_TYPE_1"/>
    <property type="match status" value="1"/>
</dbReference>
<dbReference type="PROSITE" id="PS50126">
    <property type="entry name" value="S1"/>
    <property type="match status" value="1"/>
</dbReference>
<keyword id="KW-0963">Cytoplasm</keyword>
<keyword id="KW-0460">Magnesium</keyword>
<keyword id="KW-0479">Metal-binding</keyword>
<keyword id="KW-0548">Nucleotidyltransferase</keyword>
<keyword id="KW-1185">Reference proteome</keyword>
<keyword id="KW-0694">RNA-binding</keyword>
<keyword id="KW-0808">Transferase</keyword>
<protein>
    <recommendedName>
        <fullName evidence="1">Polyribonucleotide nucleotidyltransferase</fullName>
        <ecNumber evidence="1">2.7.7.8</ecNumber>
    </recommendedName>
    <alternativeName>
        <fullName evidence="1">Polynucleotide phosphorylase</fullName>
        <shortName evidence="1">PNPase</shortName>
    </alternativeName>
</protein>
<reference key="1">
    <citation type="submission" date="2008-03" db="EMBL/GenBank/DDBJ databases">
        <title>Complete sequence of Leptothrix cholodnii SP-6.</title>
        <authorList>
            <consortium name="US DOE Joint Genome Institute"/>
            <person name="Copeland A."/>
            <person name="Lucas S."/>
            <person name="Lapidus A."/>
            <person name="Glavina del Rio T."/>
            <person name="Dalin E."/>
            <person name="Tice H."/>
            <person name="Bruce D."/>
            <person name="Goodwin L."/>
            <person name="Pitluck S."/>
            <person name="Chertkov O."/>
            <person name="Brettin T."/>
            <person name="Detter J.C."/>
            <person name="Han C."/>
            <person name="Kuske C.R."/>
            <person name="Schmutz J."/>
            <person name="Larimer F."/>
            <person name="Land M."/>
            <person name="Hauser L."/>
            <person name="Kyrpides N."/>
            <person name="Lykidis A."/>
            <person name="Emerson D."/>
            <person name="Richardson P."/>
        </authorList>
    </citation>
    <scope>NUCLEOTIDE SEQUENCE [LARGE SCALE GENOMIC DNA]</scope>
    <source>
        <strain>ATCC 51168 / LMG 8142 / SP-6</strain>
    </source>
</reference>
<name>PNP_LEPCP</name>